<proteinExistence type="inferred from homology"/>
<accession>Q55624</accession>
<reference key="1">
    <citation type="journal article" date="1995" name="DNA Res.">
        <title>Sequence analysis of the genome of the unicellular cyanobacterium Synechocystis sp. strain PCC6803. I. Sequence features in the 1 Mb region from map positions 64% to 92% of the genome.</title>
        <authorList>
            <person name="Kaneko T."/>
            <person name="Tanaka A."/>
            <person name="Sato S."/>
            <person name="Kotani H."/>
            <person name="Sazuka T."/>
            <person name="Miyajima N."/>
            <person name="Sugiura M."/>
            <person name="Tabata S."/>
        </authorList>
    </citation>
    <scope>NUCLEOTIDE SEQUENCE [LARGE SCALE GENOMIC DNA]</scope>
    <source>
        <strain>ATCC 27184 / PCC 6803 / N-1</strain>
    </source>
</reference>
<reference key="2">
    <citation type="journal article" date="1996" name="DNA Res.">
        <title>Sequence analysis of the genome of the unicellular cyanobacterium Synechocystis sp. strain PCC6803. II. Sequence determination of the entire genome and assignment of potential protein-coding regions.</title>
        <authorList>
            <person name="Kaneko T."/>
            <person name="Sato S."/>
            <person name="Kotani H."/>
            <person name="Tanaka A."/>
            <person name="Asamizu E."/>
            <person name="Nakamura Y."/>
            <person name="Miyajima N."/>
            <person name="Hirosawa M."/>
            <person name="Sugiura M."/>
            <person name="Sasamoto S."/>
            <person name="Kimura T."/>
            <person name="Hosouchi T."/>
            <person name="Matsuno A."/>
            <person name="Muraki A."/>
            <person name="Nakazaki N."/>
            <person name="Naruo K."/>
            <person name="Okumura S."/>
            <person name="Shimpo S."/>
            <person name="Takeuchi C."/>
            <person name="Wada T."/>
            <person name="Watanabe A."/>
            <person name="Yamada M."/>
            <person name="Yasuda M."/>
            <person name="Tabata S."/>
        </authorList>
    </citation>
    <scope>NUCLEOTIDE SEQUENCE [LARGE SCALE GENOMIC DNA]</scope>
    <source>
        <strain>ATCC 27184 / PCC 6803 / Kazusa</strain>
    </source>
</reference>
<keyword id="KW-0049">Antioxidant</keyword>
<keyword id="KW-0963">Cytoplasm</keyword>
<keyword id="KW-1015">Disulfide bond</keyword>
<keyword id="KW-0560">Oxidoreductase</keyword>
<keyword id="KW-0575">Peroxidase</keyword>
<keyword id="KW-0676">Redox-active center</keyword>
<keyword id="KW-1185">Reference proteome</keyword>
<comment type="function">
    <text evidence="1">Thiol-specific peroxidase that catalyzes the reduction of hydrogen peroxide and organic hydroperoxides to water and alcohols, respectively. Plays a role in cell protection against oxidative stress by detoxifying peroxides.</text>
</comment>
<comment type="catalytic activity">
    <reaction evidence="1">
        <text>a hydroperoxide + [thioredoxin]-dithiol = an alcohol + [thioredoxin]-disulfide + H2O</text>
        <dbReference type="Rhea" id="RHEA:62620"/>
        <dbReference type="Rhea" id="RHEA-COMP:10698"/>
        <dbReference type="Rhea" id="RHEA-COMP:10700"/>
        <dbReference type="ChEBI" id="CHEBI:15377"/>
        <dbReference type="ChEBI" id="CHEBI:29950"/>
        <dbReference type="ChEBI" id="CHEBI:30879"/>
        <dbReference type="ChEBI" id="CHEBI:35924"/>
        <dbReference type="ChEBI" id="CHEBI:50058"/>
        <dbReference type="EC" id="1.11.1.24"/>
    </reaction>
</comment>
<comment type="subunit">
    <text evidence="1">Homodimer; disulfide-linked, upon oxidation.</text>
</comment>
<comment type="subcellular location">
    <subcellularLocation>
        <location evidence="2">Cytoplasm</location>
    </subcellularLocation>
</comment>
<comment type="miscellaneous">
    <text evidence="1">The active site is a conserved redox-active cysteine residue, the peroxidatic cysteine (C(P)), which makes the nucleophilic attack on the peroxide substrate. The peroxide oxidizes the C(P)-SH to cysteine sulfenic acid (C(P)-SOH), which then reacts with another cysteine residue, the resolving cysteine (C(R)), to form a disulfide bridge. The disulfide is subsequently reduced by an appropriate electron donor to complete the catalytic cycle. In this typical 2-Cys peroxiredoxin, C(R) is provided by the other dimeric subunit to form an intersubunit disulfide.</text>
</comment>
<comment type="similarity">
    <text evidence="4">Belongs to the peroxiredoxin family. AhpC/Prx1 subfamily.</text>
</comment>
<sequence length="200" mass="22510">MTEVLRVGQPAPDFTATAIVDQSFQTVKLSTYRGKYLVLFFYPLDFTFVCPTEIIAFSDRHSEFTALDTEVVGISVDSEFSHLAWIQTERKMGGIGNINYPLVSDLKKEISQAYNVLEPDAGIALRGLFIIDREGILQYATVNNLSFGRSVDETLRVLKAIRHVQSHPNEVCPVDWQEGDKTMIPDPEKAKTYFETVAEP</sequence>
<evidence type="ECO:0000250" key="1">
    <source>
        <dbReference type="UniProtKB" id="P0A251"/>
    </source>
</evidence>
<evidence type="ECO:0000250" key="2">
    <source>
        <dbReference type="UniProtKB" id="P0AE08"/>
    </source>
</evidence>
<evidence type="ECO:0000255" key="3">
    <source>
        <dbReference type="PROSITE-ProRule" id="PRU00691"/>
    </source>
</evidence>
<evidence type="ECO:0000305" key="4"/>
<name>Y755_SYNY3</name>
<organism>
    <name type="scientific">Synechocystis sp. (strain ATCC 27184 / PCC 6803 / Kazusa)</name>
    <dbReference type="NCBI Taxonomy" id="1111708"/>
    <lineage>
        <taxon>Bacteria</taxon>
        <taxon>Bacillati</taxon>
        <taxon>Cyanobacteriota</taxon>
        <taxon>Cyanophyceae</taxon>
        <taxon>Synechococcales</taxon>
        <taxon>Merismopediaceae</taxon>
        <taxon>Synechocystis</taxon>
    </lineage>
</organism>
<protein>
    <recommendedName>
        <fullName>Putative peroxiredoxin sll0755</fullName>
        <ecNumber evidence="1">1.11.1.24</ecNumber>
    </recommendedName>
    <alternativeName>
        <fullName>Thioredoxin reductase</fullName>
    </alternativeName>
</protein>
<gene>
    <name type="ordered locus">sll0755</name>
</gene>
<feature type="chain" id="PRO_0000135150" description="Putative peroxiredoxin sll0755">
    <location>
        <begin position="1"/>
        <end position="200"/>
    </location>
</feature>
<feature type="domain" description="Thioredoxin" evidence="3">
    <location>
        <begin position="5"/>
        <end position="163"/>
    </location>
</feature>
<feature type="active site" description="Cysteine sulfenic acid (-SOH) intermediate" evidence="1">
    <location>
        <position position="50"/>
    </location>
</feature>
<feature type="disulfide bond" description="Interchain (with C-172); in linked form" evidence="1">
    <location>
        <position position="50"/>
    </location>
</feature>
<feature type="disulfide bond" description="Interchain (with C-50); in linked form" evidence="1">
    <location>
        <position position="172"/>
    </location>
</feature>
<dbReference type="EC" id="1.11.1.24" evidence="1"/>
<dbReference type="EMBL" id="BA000022">
    <property type="protein sequence ID" value="BAA10136.1"/>
    <property type="molecule type" value="Genomic_DNA"/>
</dbReference>
<dbReference type="PIR" id="S76284">
    <property type="entry name" value="S76284"/>
</dbReference>
<dbReference type="SMR" id="Q55624"/>
<dbReference type="FunCoup" id="Q55624">
    <property type="interactions" value="395"/>
</dbReference>
<dbReference type="IntAct" id="Q55624">
    <property type="interactions" value="2"/>
</dbReference>
<dbReference type="STRING" id="1148.gene:10499629"/>
<dbReference type="PeroxiBase" id="4412">
    <property type="entry name" value="SYspAhpC"/>
</dbReference>
<dbReference type="PaxDb" id="1148-1001510"/>
<dbReference type="EnsemblBacteria" id="BAA10136">
    <property type="protein sequence ID" value="BAA10136"/>
    <property type="gene ID" value="BAA10136"/>
</dbReference>
<dbReference type="KEGG" id="syn:sll0755"/>
<dbReference type="eggNOG" id="COG0450">
    <property type="taxonomic scope" value="Bacteria"/>
</dbReference>
<dbReference type="InParanoid" id="Q55624"/>
<dbReference type="PhylomeDB" id="Q55624"/>
<dbReference type="BRENDA" id="1.11.1.24">
    <property type="organism ID" value="6192"/>
</dbReference>
<dbReference type="Proteomes" id="UP000001425">
    <property type="component" value="Chromosome"/>
</dbReference>
<dbReference type="GO" id="GO:0005737">
    <property type="term" value="C:cytoplasm"/>
    <property type="evidence" value="ECO:0000318"/>
    <property type="project" value="GO_Central"/>
</dbReference>
<dbReference type="GO" id="GO:0008379">
    <property type="term" value="F:thioredoxin peroxidase activity"/>
    <property type="evidence" value="ECO:0000318"/>
    <property type="project" value="GO_Central"/>
</dbReference>
<dbReference type="GO" id="GO:0045454">
    <property type="term" value="P:cell redox homeostasis"/>
    <property type="evidence" value="ECO:0000318"/>
    <property type="project" value="GO_Central"/>
</dbReference>
<dbReference type="GO" id="GO:0034599">
    <property type="term" value="P:cellular response to oxidative stress"/>
    <property type="evidence" value="ECO:0000318"/>
    <property type="project" value="GO_Central"/>
</dbReference>
<dbReference type="CDD" id="cd03015">
    <property type="entry name" value="PRX_Typ2cys"/>
    <property type="match status" value="1"/>
</dbReference>
<dbReference type="FunFam" id="3.40.30.10:FF:000063">
    <property type="entry name" value="2-Cys peroxiredoxin BAS1, chloroplastic"/>
    <property type="match status" value="1"/>
</dbReference>
<dbReference type="Gene3D" id="3.40.30.10">
    <property type="entry name" value="Glutaredoxin"/>
    <property type="match status" value="1"/>
</dbReference>
<dbReference type="InterPro" id="IPR000866">
    <property type="entry name" value="AhpC/TSA"/>
</dbReference>
<dbReference type="InterPro" id="IPR050217">
    <property type="entry name" value="Peroxiredoxin"/>
</dbReference>
<dbReference type="InterPro" id="IPR024706">
    <property type="entry name" value="Peroxiredoxin_AhpC-typ"/>
</dbReference>
<dbReference type="InterPro" id="IPR019479">
    <property type="entry name" value="Peroxiredoxin_C"/>
</dbReference>
<dbReference type="InterPro" id="IPR036249">
    <property type="entry name" value="Thioredoxin-like_sf"/>
</dbReference>
<dbReference type="InterPro" id="IPR013766">
    <property type="entry name" value="Thioredoxin_domain"/>
</dbReference>
<dbReference type="PANTHER" id="PTHR10681">
    <property type="entry name" value="THIOREDOXIN PEROXIDASE"/>
    <property type="match status" value="1"/>
</dbReference>
<dbReference type="PANTHER" id="PTHR10681:SF128">
    <property type="entry name" value="THIOREDOXIN-DEPENDENT PEROXIDE REDUCTASE, MITOCHONDRIAL"/>
    <property type="match status" value="1"/>
</dbReference>
<dbReference type="Pfam" id="PF10417">
    <property type="entry name" value="1-cysPrx_C"/>
    <property type="match status" value="1"/>
</dbReference>
<dbReference type="Pfam" id="PF00578">
    <property type="entry name" value="AhpC-TSA"/>
    <property type="match status" value="1"/>
</dbReference>
<dbReference type="PIRSF" id="PIRSF000239">
    <property type="entry name" value="AHPC"/>
    <property type="match status" value="1"/>
</dbReference>
<dbReference type="SUPFAM" id="SSF52833">
    <property type="entry name" value="Thioredoxin-like"/>
    <property type="match status" value="1"/>
</dbReference>
<dbReference type="PROSITE" id="PS51352">
    <property type="entry name" value="THIOREDOXIN_2"/>
    <property type="match status" value="1"/>
</dbReference>